<sequence length="204" mass="22670">MEHAEHGNSNAPMEYQSETGRLNILGFWIFLGAEIVLFSTLFATFFVLQNRTAGGVLPDELFEVNLVMIMTFLLLISSFTCGIAVHEMRRGSLKGVVIWTIITLLLGAGFVGCEINEFVHYVHEGASLGTSAFWSGFFVLLGTHGTHVTIGIFWIIGILIQLKKRGLTPQTSSKIFISSLYWHFLDVVWIFIFTGVYLMGLGGL</sequence>
<name>QOX3_BACSH</name>
<keyword id="KW-1003">Cell membrane</keyword>
<keyword id="KW-0903">Direct protein sequencing</keyword>
<keyword id="KW-0472">Membrane</keyword>
<keyword id="KW-0560">Oxidoreductase</keyword>
<keyword id="KW-0812">Transmembrane</keyword>
<keyword id="KW-1133">Transmembrane helix</keyword>
<comment type="function">
    <text>Catalyzes quinol oxidation with the concomitant reduction of oxygen to water. Major component for energy conversion during vegetative growth.</text>
</comment>
<comment type="catalytic activity">
    <reaction>
        <text>2 a quinol + O2 = 2 a quinone + 2 H2O</text>
        <dbReference type="Rhea" id="RHEA:55376"/>
        <dbReference type="ChEBI" id="CHEBI:15377"/>
        <dbReference type="ChEBI" id="CHEBI:15379"/>
        <dbReference type="ChEBI" id="CHEBI:24646"/>
        <dbReference type="ChEBI" id="CHEBI:132124"/>
    </reaction>
</comment>
<comment type="subcellular location">
    <subcellularLocation>
        <location>Cell membrane</location>
        <topology>Multi-pass membrane protein</topology>
    </subcellularLocation>
</comment>
<comment type="similarity">
    <text evidence="2">Belongs to the cytochrome c oxidase subunit 3 family.</text>
</comment>
<evidence type="ECO:0000255" key="1"/>
<evidence type="ECO:0000305" key="2"/>
<protein>
    <recommendedName>
        <fullName>Quinol oxidase subunit 3</fullName>
        <ecNumber>1.10.3.-</ecNumber>
    </recommendedName>
    <alternativeName>
        <fullName>Oxidase aa(3)-600 subunit 3</fullName>
    </alternativeName>
    <alternativeName>
        <fullName>Quinol oxidase aa3-600, subunit qoxC</fullName>
    </alternativeName>
    <alternativeName>
        <fullName>Quinol oxidase polypeptide III</fullName>
    </alternativeName>
</protein>
<gene>
    <name type="primary">qoxC</name>
    <name type="ordered locus">BSUW23_18865</name>
</gene>
<organism>
    <name type="scientific">Bacillus spizizenii (strain ATCC 23059 / NRRL B-14472 / W23)</name>
    <name type="common">Bacillus subtilis subsp. spizizenii</name>
    <dbReference type="NCBI Taxonomy" id="655816"/>
    <lineage>
        <taxon>Bacteria</taxon>
        <taxon>Bacillati</taxon>
        <taxon>Bacillota</taxon>
        <taxon>Bacilli</taxon>
        <taxon>Bacillales</taxon>
        <taxon>Bacillaceae</taxon>
        <taxon>Bacillus</taxon>
    </lineage>
</organism>
<accession>E0TW65</accession>
<dbReference type="EC" id="1.10.3.-"/>
<dbReference type="EMBL" id="CP002183">
    <property type="protein sequence ID" value="ADM39807.1"/>
    <property type="molecule type" value="Genomic_DNA"/>
</dbReference>
<dbReference type="RefSeq" id="WP_003222171.1">
    <property type="nucleotide sequence ID" value="NZ_CP148102.1"/>
</dbReference>
<dbReference type="SMR" id="E0TW65"/>
<dbReference type="GeneID" id="76980325"/>
<dbReference type="KEGG" id="bss:BSUW23_18865"/>
<dbReference type="HOGENOM" id="CLU_044071_3_2_9"/>
<dbReference type="Proteomes" id="UP000002233">
    <property type="component" value="Chromosome"/>
</dbReference>
<dbReference type="GO" id="GO:0005886">
    <property type="term" value="C:plasma membrane"/>
    <property type="evidence" value="ECO:0007669"/>
    <property type="project" value="UniProtKB-SubCell"/>
</dbReference>
<dbReference type="GO" id="GO:0004129">
    <property type="term" value="F:cytochrome-c oxidase activity"/>
    <property type="evidence" value="ECO:0007669"/>
    <property type="project" value="InterPro"/>
</dbReference>
<dbReference type="GO" id="GO:0019646">
    <property type="term" value="P:aerobic electron transport chain"/>
    <property type="evidence" value="ECO:0007669"/>
    <property type="project" value="InterPro"/>
</dbReference>
<dbReference type="GO" id="GO:0042773">
    <property type="term" value="P:ATP synthesis coupled electron transport"/>
    <property type="evidence" value="ECO:0007669"/>
    <property type="project" value="InterPro"/>
</dbReference>
<dbReference type="CDD" id="cd02863">
    <property type="entry name" value="Ubiquinol_oxidase_III"/>
    <property type="match status" value="1"/>
</dbReference>
<dbReference type="FunFam" id="1.20.120.80:FF:000001">
    <property type="entry name" value="Cytochrome (Ubi)quinol oxidase subunit III"/>
    <property type="match status" value="1"/>
</dbReference>
<dbReference type="Gene3D" id="1.20.120.80">
    <property type="entry name" value="Cytochrome c oxidase, subunit III, four-helix bundle"/>
    <property type="match status" value="1"/>
</dbReference>
<dbReference type="InterPro" id="IPR024791">
    <property type="entry name" value="Cyt_c/ubiquinol_Oxase_su3"/>
</dbReference>
<dbReference type="InterPro" id="IPR000298">
    <property type="entry name" value="Cyt_c_oxidase-like_su3"/>
</dbReference>
<dbReference type="InterPro" id="IPR035973">
    <property type="entry name" value="Cyt_c_oxidase_su3-like_sf"/>
</dbReference>
<dbReference type="InterPro" id="IPR013833">
    <property type="entry name" value="Cyt_c_oxidase_su3_a-hlx"/>
</dbReference>
<dbReference type="InterPro" id="IPR014246">
    <property type="entry name" value="QoxC"/>
</dbReference>
<dbReference type="InterPro" id="IPR033946">
    <property type="entry name" value="Ubiquinol_oxase_su3_dom"/>
</dbReference>
<dbReference type="NCBIfam" id="TIGR02897">
    <property type="entry name" value="QoxC"/>
    <property type="match status" value="1"/>
</dbReference>
<dbReference type="PANTHER" id="PTHR11403:SF2">
    <property type="entry name" value="CYTOCHROME BO(3) UBIQUINOL OXIDASE SUBUNIT 3"/>
    <property type="match status" value="1"/>
</dbReference>
<dbReference type="PANTHER" id="PTHR11403">
    <property type="entry name" value="CYTOCHROME C OXIDASE SUBUNIT III"/>
    <property type="match status" value="1"/>
</dbReference>
<dbReference type="Pfam" id="PF00510">
    <property type="entry name" value="COX3"/>
    <property type="match status" value="1"/>
</dbReference>
<dbReference type="SUPFAM" id="SSF81452">
    <property type="entry name" value="Cytochrome c oxidase subunit III-like"/>
    <property type="match status" value="1"/>
</dbReference>
<dbReference type="PROSITE" id="PS50253">
    <property type="entry name" value="COX3"/>
    <property type="match status" value="1"/>
</dbReference>
<reference key="1">
    <citation type="journal article" date="2011" name="Microbiology">
        <title>The genome sequence of Bacillus subtilis subsp. spizizenii W23: insights into speciation within the B. subtilis complex and into the history of B. subtilis genetics.</title>
        <authorList>
            <person name="Zeigler D.R."/>
        </authorList>
    </citation>
    <scope>NUCLEOTIDE SEQUENCE [LARGE SCALE GENOMIC DNA]</scope>
    <source>
        <strain>ATCC 23059 / NRRL B-14472 / W23</strain>
    </source>
</reference>
<reference key="2">
    <citation type="journal article" date="1995" name="Arch. Microbiol.">
        <title>Properties of the menaquinol oxidase (Qox) and of qox deletion mutants of Bacillus subtilis.</title>
        <authorList>
            <person name="Lemma E."/>
            <person name="Simon J."/>
            <person name="Schagger H."/>
            <person name="Kroger A."/>
        </authorList>
    </citation>
    <scope>PROTEIN SEQUENCE OF 1-16</scope>
    <scope>CHARACTERIZATION</scope>
    <source>
        <strain>ATCC 23059 / NRRL B-14472 / W23</strain>
    </source>
</reference>
<feature type="chain" id="PRO_0000402831" description="Quinol oxidase subunit 3">
    <location>
        <begin position="1"/>
        <end position="204"/>
    </location>
</feature>
<feature type="transmembrane region" description="Helical" evidence="1">
    <location>
        <begin position="27"/>
        <end position="47"/>
    </location>
</feature>
<feature type="transmembrane region" description="Helical" evidence="1">
    <location>
        <begin position="66"/>
        <end position="86"/>
    </location>
</feature>
<feature type="transmembrane region" description="Helical" evidence="1">
    <location>
        <begin position="95"/>
        <end position="115"/>
    </location>
</feature>
<feature type="transmembrane region" description="Helical" evidence="1">
    <location>
        <begin position="140"/>
        <end position="160"/>
    </location>
</feature>
<feature type="transmembrane region" description="Helical" evidence="1">
    <location>
        <begin position="184"/>
        <end position="204"/>
    </location>
</feature>
<proteinExistence type="evidence at protein level"/>